<reference key="1">
    <citation type="journal article" date="2006" name="Mol. Microbiol.">
        <title>Role of pathogenicity island-associated integrases in the genome plasticity of uropathogenic Escherichia coli strain 536.</title>
        <authorList>
            <person name="Hochhut B."/>
            <person name="Wilde C."/>
            <person name="Balling G."/>
            <person name="Middendorf B."/>
            <person name="Dobrindt U."/>
            <person name="Brzuszkiewicz E."/>
            <person name="Gottschalk G."/>
            <person name="Carniel E."/>
            <person name="Hacker J."/>
        </authorList>
    </citation>
    <scope>NUCLEOTIDE SEQUENCE [LARGE SCALE GENOMIC DNA]</scope>
    <source>
        <strain>536 / UPEC</strain>
    </source>
</reference>
<organism>
    <name type="scientific">Escherichia coli O6:K15:H31 (strain 536 / UPEC)</name>
    <dbReference type="NCBI Taxonomy" id="362663"/>
    <lineage>
        <taxon>Bacteria</taxon>
        <taxon>Pseudomonadati</taxon>
        <taxon>Pseudomonadota</taxon>
        <taxon>Gammaproteobacteria</taxon>
        <taxon>Enterobacterales</taxon>
        <taxon>Enterobacteriaceae</taxon>
        <taxon>Escherichia</taxon>
    </lineage>
</organism>
<gene>
    <name evidence="1" type="primary">metE</name>
    <name type="ordered locus">ECP_4023</name>
</gene>
<evidence type="ECO:0000255" key="1">
    <source>
        <dbReference type="HAMAP-Rule" id="MF_00172"/>
    </source>
</evidence>
<name>METE_ECOL5</name>
<proteinExistence type="inferred from homology"/>
<dbReference type="EC" id="2.1.1.14" evidence="1"/>
<dbReference type="EMBL" id="CP000247">
    <property type="protein sequence ID" value="ABG71983.1"/>
    <property type="molecule type" value="Genomic_DNA"/>
</dbReference>
<dbReference type="RefSeq" id="WP_000153919.1">
    <property type="nucleotide sequence ID" value="NC_008253.1"/>
</dbReference>
<dbReference type="SMR" id="Q0TAP6"/>
<dbReference type="KEGG" id="ecp:ECP_4023"/>
<dbReference type="HOGENOM" id="CLU_013175_0_0_6"/>
<dbReference type="UniPathway" id="UPA00051">
    <property type="reaction ID" value="UER00082"/>
</dbReference>
<dbReference type="Proteomes" id="UP000009182">
    <property type="component" value="Chromosome"/>
</dbReference>
<dbReference type="GO" id="GO:0003871">
    <property type="term" value="F:5-methyltetrahydropteroyltriglutamate-homocysteine S-methyltransferase activity"/>
    <property type="evidence" value="ECO:0007669"/>
    <property type="project" value="UniProtKB-UniRule"/>
</dbReference>
<dbReference type="GO" id="GO:0008270">
    <property type="term" value="F:zinc ion binding"/>
    <property type="evidence" value="ECO:0007669"/>
    <property type="project" value="InterPro"/>
</dbReference>
<dbReference type="GO" id="GO:0009086">
    <property type="term" value="P:methionine biosynthetic process"/>
    <property type="evidence" value="ECO:0007669"/>
    <property type="project" value="UniProtKB-UniRule"/>
</dbReference>
<dbReference type="GO" id="GO:0032259">
    <property type="term" value="P:methylation"/>
    <property type="evidence" value="ECO:0007669"/>
    <property type="project" value="UniProtKB-KW"/>
</dbReference>
<dbReference type="CDD" id="cd03311">
    <property type="entry name" value="CIMS_C_terminal_like"/>
    <property type="match status" value="1"/>
</dbReference>
<dbReference type="CDD" id="cd03312">
    <property type="entry name" value="CIMS_N_terminal_like"/>
    <property type="match status" value="1"/>
</dbReference>
<dbReference type="FunFam" id="3.20.20.210:FF:000002">
    <property type="entry name" value="5-methyltetrahydropteroyltriglutamate--homocysteine methyltransferase"/>
    <property type="match status" value="1"/>
</dbReference>
<dbReference type="FunFam" id="3.20.20.210:FF:000003">
    <property type="entry name" value="5-methyltetrahydropteroyltriglutamate--homocysteine methyltransferase"/>
    <property type="match status" value="1"/>
</dbReference>
<dbReference type="Gene3D" id="3.20.20.210">
    <property type="match status" value="2"/>
</dbReference>
<dbReference type="HAMAP" id="MF_00172">
    <property type="entry name" value="Meth_synth"/>
    <property type="match status" value="1"/>
</dbReference>
<dbReference type="InterPro" id="IPR013215">
    <property type="entry name" value="Cbl-indep_Met_Synth_N"/>
</dbReference>
<dbReference type="InterPro" id="IPR006276">
    <property type="entry name" value="Cobalamin-indep_Met_synthase"/>
</dbReference>
<dbReference type="InterPro" id="IPR002629">
    <property type="entry name" value="Met_Synth_C/arc"/>
</dbReference>
<dbReference type="InterPro" id="IPR038071">
    <property type="entry name" value="UROD/MetE-like_sf"/>
</dbReference>
<dbReference type="NCBIfam" id="TIGR01371">
    <property type="entry name" value="met_syn_B12ind"/>
    <property type="match status" value="1"/>
</dbReference>
<dbReference type="NCBIfam" id="NF003556">
    <property type="entry name" value="PRK05222.1"/>
    <property type="match status" value="1"/>
</dbReference>
<dbReference type="PANTHER" id="PTHR30519">
    <property type="entry name" value="5-METHYLTETRAHYDROPTEROYLTRIGLUTAMATE--HOMOCYSTEINE METHYLTRANSFERASE"/>
    <property type="match status" value="1"/>
</dbReference>
<dbReference type="Pfam" id="PF08267">
    <property type="entry name" value="Meth_synt_1"/>
    <property type="match status" value="1"/>
</dbReference>
<dbReference type="Pfam" id="PF01717">
    <property type="entry name" value="Meth_synt_2"/>
    <property type="match status" value="1"/>
</dbReference>
<dbReference type="PIRSF" id="PIRSF000382">
    <property type="entry name" value="MeTrfase_B12_ind"/>
    <property type="match status" value="1"/>
</dbReference>
<dbReference type="SUPFAM" id="SSF51726">
    <property type="entry name" value="UROD/MetE-like"/>
    <property type="match status" value="2"/>
</dbReference>
<feature type="chain" id="PRO_1000017241" description="5-methyltetrahydropteroyltriglutamate--homocysteine methyltransferase">
    <location>
        <begin position="1"/>
        <end position="753"/>
    </location>
</feature>
<feature type="active site" description="Proton donor" evidence="1">
    <location>
        <position position="694"/>
    </location>
</feature>
<feature type="binding site" evidence="1">
    <location>
        <begin position="17"/>
        <end position="20"/>
    </location>
    <ligand>
        <name>5-methyltetrahydropteroyltri-L-glutamate</name>
        <dbReference type="ChEBI" id="CHEBI:58207"/>
    </ligand>
</feature>
<feature type="binding site" evidence="1">
    <location>
        <position position="117"/>
    </location>
    <ligand>
        <name>5-methyltetrahydropteroyltri-L-glutamate</name>
        <dbReference type="ChEBI" id="CHEBI:58207"/>
    </ligand>
</feature>
<feature type="binding site" evidence="1">
    <location>
        <begin position="431"/>
        <end position="433"/>
    </location>
    <ligand>
        <name>L-homocysteine</name>
        <dbReference type="ChEBI" id="CHEBI:58199"/>
    </ligand>
</feature>
<feature type="binding site" evidence="1">
    <location>
        <begin position="431"/>
        <end position="433"/>
    </location>
    <ligand>
        <name>L-methionine</name>
        <dbReference type="ChEBI" id="CHEBI:57844"/>
    </ligand>
</feature>
<feature type="binding site" evidence="1">
    <location>
        <position position="484"/>
    </location>
    <ligand>
        <name>L-homocysteine</name>
        <dbReference type="ChEBI" id="CHEBI:58199"/>
    </ligand>
</feature>
<feature type="binding site" evidence="1">
    <location>
        <position position="484"/>
    </location>
    <ligand>
        <name>L-methionine</name>
        <dbReference type="ChEBI" id="CHEBI:57844"/>
    </ligand>
</feature>
<feature type="binding site" evidence="1">
    <location>
        <begin position="515"/>
        <end position="516"/>
    </location>
    <ligand>
        <name>5-methyltetrahydropteroyltri-L-glutamate</name>
        <dbReference type="ChEBI" id="CHEBI:58207"/>
    </ligand>
</feature>
<feature type="binding site" evidence="1">
    <location>
        <position position="561"/>
    </location>
    <ligand>
        <name>5-methyltetrahydropteroyltri-L-glutamate</name>
        <dbReference type="ChEBI" id="CHEBI:58207"/>
    </ligand>
</feature>
<feature type="binding site" evidence="1">
    <location>
        <position position="599"/>
    </location>
    <ligand>
        <name>L-homocysteine</name>
        <dbReference type="ChEBI" id="CHEBI:58199"/>
    </ligand>
</feature>
<feature type="binding site" evidence="1">
    <location>
        <position position="599"/>
    </location>
    <ligand>
        <name>L-methionine</name>
        <dbReference type="ChEBI" id="CHEBI:57844"/>
    </ligand>
</feature>
<feature type="binding site" evidence="1">
    <location>
        <position position="605"/>
    </location>
    <ligand>
        <name>5-methyltetrahydropteroyltri-L-glutamate</name>
        <dbReference type="ChEBI" id="CHEBI:58207"/>
    </ligand>
</feature>
<feature type="binding site" evidence="1">
    <location>
        <position position="641"/>
    </location>
    <ligand>
        <name>Zn(2+)</name>
        <dbReference type="ChEBI" id="CHEBI:29105"/>
        <note>catalytic</note>
    </ligand>
</feature>
<feature type="binding site" evidence="1">
    <location>
        <position position="643"/>
    </location>
    <ligand>
        <name>Zn(2+)</name>
        <dbReference type="ChEBI" id="CHEBI:29105"/>
        <note>catalytic</note>
    </ligand>
</feature>
<feature type="binding site" evidence="1">
    <location>
        <position position="665"/>
    </location>
    <ligand>
        <name>Zn(2+)</name>
        <dbReference type="ChEBI" id="CHEBI:29105"/>
        <note>catalytic</note>
    </ligand>
</feature>
<feature type="binding site" evidence="1">
    <location>
        <position position="726"/>
    </location>
    <ligand>
        <name>Zn(2+)</name>
        <dbReference type="ChEBI" id="CHEBI:29105"/>
        <note>catalytic</note>
    </ligand>
</feature>
<sequence>MTILNHTLGFPRVGLRRELKKAQESYWAGNSTREELLAVGRELRARHWDQQKQAGIDLLPVGDFAWYDHVLTTSLLLGNVPARHQNKDGSVDIDTLFRIGRGRAPTGEPAAAAEMTKWFNTNYHYMVPEFVKGQQFKLTWTQLLEEVDEALALGHKVKPVLLGPVTYLWLGKVKGEQFDRLSLLNDILPVYQQVLAELAKRGIEWVQIDEPALVLELPQAWLDAYKPAYDALQGQVKLLLTTYFEGVTPNLDTITALPVQGLHVDLVHGKDDVAELHKRLPSDWLLSAGLINGRNVWRADLTEKYAQIKDIVGKRDLWVASSCSLLHSPIDLSVETRLDAEVKSWFAFALQKCHELALLRDVLNSGDTAALAEWSAPIQARRHSTRVHNPAVEKRLAAITAQDSQRTNVYEVRAEAQRARFKLPAWPTTTIGSFPQTTEIRTLRLDFKKGNLDANNYRTGIAEHIKQAIVEQERLGLDVLVHGEAERNDMVEYFGEHLDGFVFTQNGWVQSYGSRCVKPPIVIGDVSRPAPITVEWAKYAQSLTDKPVKGMLTGPVTILCWSFPREDVSRETIAKQIALALRDEVADLEAAGIGIIQIDEPALREGLPLRRSDWDAYLQWGVEAFRINAAVAKDDTQIHTHMCYCEFNDIMDSIAALDADVITIETSRSDMELLESFEEFDYPNEIGPGVYDIHSPNVPSVEWIEALLKKAAKRIPAERLWVNPDCGLKTRGWPETRAALANMVQAAQNLRRG</sequence>
<keyword id="KW-0028">Amino-acid biosynthesis</keyword>
<keyword id="KW-0479">Metal-binding</keyword>
<keyword id="KW-0486">Methionine biosynthesis</keyword>
<keyword id="KW-0489">Methyltransferase</keyword>
<keyword id="KW-0677">Repeat</keyword>
<keyword id="KW-0808">Transferase</keyword>
<keyword id="KW-0862">Zinc</keyword>
<comment type="function">
    <text evidence="1">Catalyzes the transfer of a methyl group from 5-methyltetrahydrofolate to homocysteine resulting in methionine formation.</text>
</comment>
<comment type="catalytic activity">
    <reaction evidence="1">
        <text>5-methyltetrahydropteroyltri-L-glutamate + L-homocysteine = tetrahydropteroyltri-L-glutamate + L-methionine</text>
        <dbReference type="Rhea" id="RHEA:21196"/>
        <dbReference type="ChEBI" id="CHEBI:57844"/>
        <dbReference type="ChEBI" id="CHEBI:58140"/>
        <dbReference type="ChEBI" id="CHEBI:58199"/>
        <dbReference type="ChEBI" id="CHEBI:58207"/>
        <dbReference type="EC" id="2.1.1.14"/>
    </reaction>
</comment>
<comment type="cofactor">
    <cofactor evidence="1">
        <name>Zn(2+)</name>
        <dbReference type="ChEBI" id="CHEBI:29105"/>
    </cofactor>
    <text evidence="1">Binds 1 zinc ion per subunit.</text>
</comment>
<comment type="pathway">
    <text evidence="1">Amino-acid biosynthesis; L-methionine biosynthesis via de novo pathway; L-methionine from L-homocysteine (MetE route): step 1/1.</text>
</comment>
<comment type="similarity">
    <text evidence="1">Belongs to the vitamin-B12 independent methionine synthase family.</text>
</comment>
<protein>
    <recommendedName>
        <fullName evidence="1">5-methyltetrahydropteroyltriglutamate--homocysteine methyltransferase</fullName>
        <ecNumber evidence="1">2.1.1.14</ecNumber>
    </recommendedName>
    <alternativeName>
        <fullName evidence="1">Cobalamin-independent methionine synthase</fullName>
    </alternativeName>
    <alternativeName>
        <fullName evidence="1">Methionine synthase, vitamin-B12 independent isozyme</fullName>
    </alternativeName>
</protein>
<accession>Q0TAP6</accession>